<proteinExistence type="evidence at protein level"/>
<comment type="function">
    <text evidence="1 3 5 6 7">Is associated with a DNA binding complex that binds to the G box, a well-characterized cis-acting DNA regulatory element found in plant genes (By similarity). Specific negative regulator of slow-vacuolar (SV) ion channel. Mediates F-actin dynamics possibly through inhibiting ADF1 phosphorylation (PubMed:26345162). Negative regulator of freezing tolerance that modulates cold-responsive C-repeat-binding factors (CBF) DREB1A and DREB1B proteins stability by facilitating their ubiquitin-mediated degradation when activated by CRPK1-mediated phosphorylation in freezing conditions; this processus is counteracted by B1L (PubMed:28344081, PubMed:31297122).</text>
</comment>
<comment type="subunit">
    <text evidence="2 3 4 5 6 7">Interacts with SERK1 in the cell membrane. Component of the SERK1 signaling complex, composed of KAPP, CDC48A, GRF6 or GRF7, SERK1, SERK2, SERK3/BAK1 and BRI1 (PubMed:15592873). Interacts with TPK1 (PubMed:17764516). Interacts with ADF1 (PubMed:26345162). Binds to CRPK1 at the plasma membrane. Interacts with DREB1A and DREB1B in the nucleus when activated by CRPK1-mediated phosphorylation upon freezing (PubMed:28344081). Interacts with CINV1 (PubMed:25256212). Binds to the N-terminal region of B1L (PubMed:31297122).</text>
</comment>
<comment type="interaction">
    <interactant intactId="EBI-1633785">
        <id>P48349</id>
    </interactant>
    <interactant intactId="EBI-1803261">
        <id>Q8S307</id>
        <label>BZR1</label>
    </interactant>
    <organismsDiffer>false</organismsDiffer>
    <experiments>5</experiments>
</comment>
<comment type="interaction">
    <interactant intactId="EBI-1633785">
        <id>P48349</id>
    </interactant>
    <interactant intactId="EBI-1553849">
        <id>O48963</id>
        <label>PHOT1</label>
    </interactant>
    <organismsDiffer>false</organismsDiffer>
    <experiments>6</experiments>
</comment>
<comment type="interaction">
    <interactant intactId="EBI-1633785">
        <id>P48349</id>
    </interactant>
    <interactant intactId="EBI-2460628">
        <id>Q9C5Z6</id>
        <label>RPW8.2</label>
    </interactant>
    <organismsDiffer>false</organismsDiffer>
    <experiments>4</experiments>
</comment>
<comment type="interaction">
    <interactant intactId="EBI-1633785">
        <id>P48349</id>
    </interactant>
    <interactant intactId="EBI-1555537">
        <id>Q94AG2</id>
        <label>SERK1</label>
    </interactant>
    <organismsDiffer>false</organismsDiffer>
    <experiments>6</experiments>
</comment>
<comment type="subcellular location">
    <subcellularLocation>
        <location evidence="2 6">Nucleus</location>
    </subcellularLocation>
    <subcellularLocation>
        <location evidence="2">Cell membrane</location>
    </subcellularLocation>
    <subcellularLocation>
        <location evidence="6">Cytoplasm</location>
    </subcellularLocation>
    <text evidence="6">Translocates from the cytosol to the nucleus when phosphorylated by CRPK1 in response to cold stress.</text>
</comment>
<comment type="alternative products">
    <event type="alternative splicing"/>
    <isoform>
        <id>P48349-1</id>
        <name>1</name>
        <sequence type="displayed"/>
    </isoform>
    <isoform>
        <id>P48349-2</id>
        <name>2</name>
        <sequence type="described" ref="VSP_041594"/>
    </isoform>
</comment>
<comment type="induction">
    <text>By cold.</text>
</comment>
<comment type="PTM">
    <text>Transphosphorylated by SERK1.</text>
</comment>
<comment type="PTM">
    <text evidence="6">Phosphorylated by CRPK1 in response to cold.</text>
</comment>
<comment type="disruption phenotype">
    <text evidence="5 6 7">Increased length of hypocotyls under dark-grown conditions. Altered actin arrays in hypocotyl cells. Enhanced freezing tolerance associated with enhanced cold induction of cold-responsive C-repeat-binding factor (CBF) target genes in the double mutant lacking both GRF6 and GRF8, probably due to the suppression of ubiquitin-mediated degradation DREB1A and DREB1B degradation by the 26S proteasome pathway (PubMed:28344081, PubMed:31297122). Increased sensitivity to cold in plants lacking both B1L and GRF6 (PubMed:31297122). But enhanced freezing tolerance in the triple mutant lacking B1L, GRF6 and GRF8 (PubMed:31297122).</text>
</comment>
<comment type="similarity">
    <text evidence="13">Belongs to the 14-3-3 family.</text>
</comment>
<gene>
    <name evidence="12" type="primary">GRF6</name>
    <name evidence="10" type="synonym">AFT1</name>
    <name evidence="9" type="synonym">RCI2</name>
    <name evidence="14" type="ordered locus">At5g10450</name>
    <name evidence="15" type="ORF">F12B17_200</name>
</gene>
<accession>P48349</accession>
<accession>P42647</accession>
<accession>Q9LX97</accession>
<organism>
    <name type="scientific">Arabidopsis thaliana</name>
    <name type="common">Mouse-ear cress</name>
    <dbReference type="NCBI Taxonomy" id="3702"/>
    <lineage>
        <taxon>Eukaryota</taxon>
        <taxon>Viridiplantae</taxon>
        <taxon>Streptophyta</taxon>
        <taxon>Embryophyta</taxon>
        <taxon>Tracheophyta</taxon>
        <taxon>Spermatophyta</taxon>
        <taxon>Magnoliopsida</taxon>
        <taxon>eudicotyledons</taxon>
        <taxon>Gunneridae</taxon>
        <taxon>Pentapetalae</taxon>
        <taxon>rosids</taxon>
        <taxon>malvids</taxon>
        <taxon>Brassicales</taxon>
        <taxon>Brassicaceae</taxon>
        <taxon>Camelineae</taxon>
        <taxon>Arabidopsis</taxon>
    </lineage>
</organism>
<name>14336_ARATH</name>
<sequence>MAATLGRDQYVYMAKLAEQAERYEEMVQFMEQLVTGATPAEELTVEERNLLSVAYKNVIGSLRAAWRIVSSIEQKEESRKNDEHVSLVKDYRSKVESELSSVCSGILKLLDSHLIPSAGASESKVFYLKMKGDYHRYMAEFKSGDERKTAAEDTMLAYKAAQDIAAADMAPTHPIRLGLALNFSVFYYEILNSSDKACNMAKQAFEEAIAELDTLGEESYKDSTLIMQLLRDNLTLWTSDMQEQMDEA</sequence>
<dbReference type="EMBL" id="X74141">
    <property type="protein sequence ID" value="CAA52238.1"/>
    <property type="molecule type" value="mRNA"/>
</dbReference>
<dbReference type="EMBL" id="U02565">
    <property type="protein sequence ID" value="AAA74737.1"/>
    <property type="molecule type" value="mRNA"/>
</dbReference>
<dbReference type="EMBL" id="U68545">
    <property type="protein sequence ID" value="AAB08482.1"/>
    <property type="molecule type" value="mRNA"/>
</dbReference>
<dbReference type="EMBL" id="AF145298">
    <property type="protein sequence ID" value="AAD51781.1"/>
    <property type="molecule type" value="Genomic_DNA"/>
</dbReference>
<dbReference type="EMBL" id="AL353995">
    <property type="protein sequence ID" value="CAB89398.1"/>
    <property type="molecule type" value="Genomic_DNA"/>
</dbReference>
<dbReference type="EMBL" id="CP002688">
    <property type="protein sequence ID" value="AED91541.1"/>
    <property type="molecule type" value="Genomic_DNA"/>
</dbReference>
<dbReference type="EMBL" id="CP002688">
    <property type="protein sequence ID" value="AED91544.1"/>
    <property type="molecule type" value="Genomic_DNA"/>
</dbReference>
<dbReference type="EMBL" id="AY052293">
    <property type="protein sequence ID" value="AAK96486.1"/>
    <property type="molecule type" value="mRNA"/>
</dbReference>
<dbReference type="EMBL" id="AY061918">
    <property type="protein sequence ID" value="AAL31245.1"/>
    <property type="molecule type" value="mRNA"/>
</dbReference>
<dbReference type="PIR" id="S47970">
    <property type="entry name" value="S47970"/>
</dbReference>
<dbReference type="PIR" id="S53727">
    <property type="entry name" value="S53727"/>
</dbReference>
<dbReference type="PIR" id="T49994">
    <property type="entry name" value="T49994"/>
</dbReference>
<dbReference type="RefSeq" id="NP_001190276.1">
    <molecule id="P48349-2"/>
    <property type="nucleotide sequence ID" value="NM_001203347.1"/>
</dbReference>
<dbReference type="RefSeq" id="NP_568229.1">
    <molecule id="P48349-1"/>
    <property type="nucleotide sequence ID" value="NM_121083.4"/>
</dbReference>
<dbReference type="PDB" id="8QT5">
    <property type="method" value="X-ray"/>
    <property type="resolution" value="2.69 A"/>
    <property type="chains" value="A/B/C/D/E/F/G=1-248"/>
</dbReference>
<dbReference type="PDBsum" id="8QT5"/>
<dbReference type="SMR" id="P48349"/>
<dbReference type="BioGRID" id="16187">
    <property type="interactions" value="39"/>
</dbReference>
<dbReference type="FunCoup" id="P48349">
    <property type="interactions" value="3214"/>
</dbReference>
<dbReference type="IntAct" id="P48349">
    <property type="interactions" value="13"/>
</dbReference>
<dbReference type="MINT" id="P48349"/>
<dbReference type="STRING" id="3702.P48349"/>
<dbReference type="TCDB" id="8.A.98.1.8">
    <property type="family name" value="the 14-3-3 protein (14-3-3) family"/>
</dbReference>
<dbReference type="GlyGen" id="P48349">
    <property type="glycosylation" value="1 site"/>
</dbReference>
<dbReference type="iPTMnet" id="P48349"/>
<dbReference type="SwissPalm" id="P48349"/>
<dbReference type="PaxDb" id="3702-AT5G10450.4"/>
<dbReference type="ProteomicsDB" id="245171">
    <molecule id="P48349-1"/>
</dbReference>
<dbReference type="EnsemblPlants" id="AT5G10450.1">
    <molecule id="P48349-1"/>
    <property type="protein sequence ID" value="AT5G10450.1"/>
    <property type="gene ID" value="AT5G10450"/>
</dbReference>
<dbReference type="EnsemblPlants" id="AT5G10450.4">
    <molecule id="P48349-2"/>
    <property type="protein sequence ID" value="AT5G10450.4"/>
    <property type="gene ID" value="AT5G10450"/>
</dbReference>
<dbReference type="GeneID" id="830909"/>
<dbReference type="Gramene" id="AT5G10450.1">
    <molecule id="P48349-1"/>
    <property type="protein sequence ID" value="AT5G10450.1"/>
    <property type="gene ID" value="AT5G10450"/>
</dbReference>
<dbReference type="Gramene" id="AT5G10450.4">
    <molecule id="P48349-2"/>
    <property type="protein sequence ID" value="AT5G10450.4"/>
    <property type="gene ID" value="AT5G10450"/>
</dbReference>
<dbReference type="KEGG" id="ath:AT5G10450"/>
<dbReference type="Araport" id="AT5G10450"/>
<dbReference type="TAIR" id="AT5G10450">
    <property type="gene designation" value="GRF6"/>
</dbReference>
<dbReference type="eggNOG" id="KOG0841">
    <property type="taxonomic scope" value="Eukaryota"/>
</dbReference>
<dbReference type="InParanoid" id="P48349"/>
<dbReference type="OrthoDB" id="10260625at2759"/>
<dbReference type="PhylomeDB" id="P48349"/>
<dbReference type="CD-CODE" id="4299E36E">
    <property type="entry name" value="Nucleolus"/>
</dbReference>
<dbReference type="PRO" id="PR:P48349"/>
<dbReference type="Proteomes" id="UP000006548">
    <property type="component" value="Chromosome 5"/>
</dbReference>
<dbReference type="ExpressionAtlas" id="P48349">
    <property type="expression patterns" value="baseline and differential"/>
</dbReference>
<dbReference type="GO" id="GO:0005737">
    <property type="term" value="C:cytoplasm"/>
    <property type="evidence" value="ECO:0000314"/>
    <property type="project" value="TAIR"/>
</dbReference>
<dbReference type="GO" id="GO:0005829">
    <property type="term" value="C:cytosol"/>
    <property type="evidence" value="ECO:0000314"/>
    <property type="project" value="TAIR"/>
</dbReference>
<dbReference type="GO" id="GO:0005634">
    <property type="term" value="C:nucleus"/>
    <property type="evidence" value="ECO:0000314"/>
    <property type="project" value="UniProtKB"/>
</dbReference>
<dbReference type="GO" id="GO:0009505">
    <property type="term" value="C:plant-type cell wall"/>
    <property type="evidence" value="ECO:0007005"/>
    <property type="project" value="TAIR"/>
</dbReference>
<dbReference type="GO" id="GO:0005886">
    <property type="term" value="C:plasma membrane"/>
    <property type="evidence" value="ECO:0000314"/>
    <property type="project" value="UniProtKB"/>
</dbReference>
<dbReference type="GO" id="GO:0009742">
    <property type="term" value="P:brassinosteroid mediated signaling pathway"/>
    <property type="evidence" value="ECO:0000353"/>
    <property type="project" value="TAIR"/>
</dbReference>
<dbReference type="GO" id="GO:0045732">
    <property type="term" value="P:positive regulation of protein catabolic process"/>
    <property type="evidence" value="ECO:0000315"/>
    <property type="project" value="TAIR"/>
</dbReference>
<dbReference type="GO" id="GO:0009409">
    <property type="term" value="P:response to cold"/>
    <property type="evidence" value="ECO:0000316"/>
    <property type="project" value="TAIR"/>
</dbReference>
<dbReference type="GO" id="GO:0050826">
    <property type="term" value="P:response to freezing"/>
    <property type="evidence" value="ECO:0000315"/>
    <property type="project" value="UniProtKB"/>
</dbReference>
<dbReference type="FunFam" id="1.20.190.20:FF:000002">
    <property type="entry name" value="14-3-3 protein epsilon"/>
    <property type="match status" value="1"/>
</dbReference>
<dbReference type="Gene3D" id="1.20.190.20">
    <property type="entry name" value="14-3-3 domain"/>
    <property type="match status" value="1"/>
</dbReference>
<dbReference type="InterPro" id="IPR000308">
    <property type="entry name" value="14-3-3"/>
</dbReference>
<dbReference type="InterPro" id="IPR023409">
    <property type="entry name" value="14-3-3_CS"/>
</dbReference>
<dbReference type="InterPro" id="IPR036815">
    <property type="entry name" value="14-3-3_dom_sf"/>
</dbReference>
<dbReference type="InterPro" id="IPR023410">
    <property type="entry name" value="14-3-3_domain"/>
</dbReference>
<dbReference type="PANTHER" id="PTHR18860">
    <property type="entry name" value="14-3-3 PROTEIN"/>
    <property type="match status" value="1"/>
</dbReference>
<dbReference type="Pfam" id="PF00244">
    <property type="entry name" value="14-3-3"/>
    <property type="match status" value="1"/>
</dbReference>
<dbReference type="PIRSF" id="PIRSF000868">
    <property type="entry name" value="14-3-3"/>
    <property type="match status" value="1"/>
</dbReference>
<dbReference type="PRINTS" id="PR00305">
    <property type="entry name" value="1433ZETA"/>
</dbReference>
<dbReference type="SMART" id="SM00101">
    <property type="entry name" value="14_3_3"/>
    <property type="match status" value="1"/>
</dbReference>
<dbReference type="SUPFAM" id="SSF48445">
    <property type="entry name" value="14-3-3 protein"/>
    <property type="match status" value="1"/>
</dbReference>
<dbReference type="PROSITE" id="PS00796">
    <property type="entry name" value="1433_1"/>
    <property type="match status" value="1"/>
</dbReference>
<dbReference type="PROSITE" id="PS00797">
    <property type="entry name" value="1433_2"/>
    <property type="match status" value="1"/>
</dbReference>
<reference key="1">
    <citation type="journal article" date="1994" name="Plant Mol. Biol.">
        <title>Two related low-temperature-inducible genes of Arabidopsis encode proteins showing high homology to 14-3-3 proteins, a family of putative kinase regulators.</title>
        <authorList>
            <person name="Jarillo J.A."/>
            <person name="Capel J."/>
            <person name="Leyva A."/>
            <person name="Martinez Zapater J.M."/>
            <person name="Salinas J."/>
        </authorList>
    </citation>
    <scope>NUCLEOTIDE SEQUENCE [MRNA]</scope>
</reference>
<reference key="2">
    <citation type="journal article" date="1995" name="Biochim. Biophys. Acta">
        <title>Isolation and expression of an Arabidopsis 14-3-3-like protein gene.</title>
        <authorList>
            <person name="Zhang H."/>
            <person name="Wang J."/>
            <person name="Hwang I."/>
            <person name="Goodman H.M."/>
        </authorList>
    </citation>
    <scope>NUCLEOTIDE SEQUENCE [MRNA]</scope>
    <source>
        <strain>cv. Columbia</strain>
        <tissue>Leaf</tissue>
    </source>
</reference>
<reference key="3">
    <citation type="journal article" date="1997" name="Plant Physiol.">
        <title>The Arabidopsis 14-3-3 multigene family.</title>
        <authorList>
            <person name="Wu K."/>
            <person name="Rooney M.F."/>
            <person name="Ferl R.J."/>
        </authorList>
    </citation>
    <scope>NUCLEOTIDE SEQUENCE [MRNA]</scope>
    <source>
        <strain>cv. Columbia</strain>
    </source>
</reference>
<reference key="4">
    <citation type="online journal article" date="1999" name="Plant Gene Register">
        <title>Sequences of five Arabidopsis general regulatory factor (GRF) genes encoding 14-3-3 proteins.</title>
        <authorList>
            <person name="Chung H.-J."/>
            <person name="Shanker S."/>
            <person name="Ferl R.J."/>
        </authorList>
        <locator>PGR99-114</locator>
    </citation>
    <scope>NUCLEOTIDE SEQUENCE [GENOMIC DNA]</scope>
    <source>
        <strain>cv. Columbia</strain>
    </source>
</reference>
<reference key="5">
    <citation type="journal article" date="2000" name="Nature">
        <title>Sequence and analysis of chromosome 5 of the plant Arabidopsis thaliana.</title>
        <authorList>
            <person name="Tabata S."/>
            <person name="Kaneko T."/>
            <person name="Nakamura Y."/>
            <person name="Kotani H."/>
            <person name="Kato T."/>
            <person name="Asamizu E."/>
            <person name="Miyajima N."/>
            <person name="Sasamoto S."/>
            <person name="Kimura T."/>
            <person name="Hosouchi T."/>
            <person name="Kawashima K."/>
            <person name="Kohara M."/>
            <person name="Matsumoto M."/>
            <person name="Matsuno A."/>
            <person name="Muraki A."/>
            <person name="Nakayama S."/>
            <person name="Nakazaki N."/>
            <person name="Naruo K."/>
            <person name="Okumura S."/>
            <person name="Shinpo S."/>
            <person name="Takeuchi C."/>
            <person name="Wada T."/>
            <person name="Watanabe A."/>
            <person name="Yamada M."/>
            <person name="Yasuda M."/>
            <person name="Sato S."/>
            <person name="de la Bastide M."/>
            <person name="Huang E."/>
            <person name="Spiegel L."/>
            <person name="Gnoj L."/>
            <person name="O'Shaughnessy A."/>
            <person name="Preston R."/>
            <person name="Habermann K."/>
            <person name="Murray J."/>
            <person name="Johnson D."/>
            <person name="Rohlfing T."/>
            <person name="Nelson J."/>
            <person name="Stoneking T."/>
            <person name="Pepin K."/>
            <person name="Spieth J."/>
            <person name="Sekhon M."/>
            <person name="Armstrong J."/>
            <person name="Becker M."/>
            <person name="Belter E."/>
            <person name="Cordum H."/>
            <person name="Cordes M."/>
            <person name="Courtney L."/>
            <person name="Courtney W."/>
            <person name="Dante M."/>
            <person name="Du H."/>
            <person name="Edwards J."/>
            <person name="Fryman J."/>
            <person name="Haakensen B."/>
            <person name="Lamar E."/>
            <person name="Latreille P."/>
            <person name="Leonard S."/>
            <person name="Meyer R."/>
            <person name="Mulvaney E."/>
            <person name="Ozersky P."/>
            <person name="Riley A."/>
            <person name="Strowmatt C."/>
            <person name="Wagner-McPherson C."/>
            <person name="Wollam A."/>
            <person name="Yoakum M."/>
            <person name="Bell M."/>
            <person name="Dedhia N."/>
            <person name="Parnell L."/>
            <person name="Shah R."/>
            <person name="Rodriguez M."/>
            <person name="Hoon See L."/>
            <person name="Vil D."/>
            <person name="Baker J."/>
            <person name="Kirchoff K."/>
            <person name="Toth K."/>
            <person name="King L."/>
            <person name="Bahret A."/>
            <person name="Miller B."/>
            <person name="Marra M.A."/>
            <person name="Martienssen R."/>
            <person name="McCombie W.R."/>
            <person name="Wilson R.K."/>
            <person name="Murphy G."/>
            <person name="Bancroft I."/>
            <person name="Volckaert G."/>
            <person name="Wambutt R."/>
            <person name="Duesterhoeft A."/>
            <person name="Stiekema W."/>
            <person name="Pohl T."/>
            <person name="Entian K.-D."/>
            <person name="Terryn N."/>
            <person name="Hartley N."/>
            <person name="Bent E."/>
            <person name="Johnson S."/>
            <person name="Langham S.-A."/>
            <person name="McCullagh B."/>
            <person name="Robben J."/>
            <person name="Grymonprez B."/>
            <person name="Zimmermann W."/>
            <person name="Ramsperger U."/>
            <person name="Wedler H."/>
            <person name="Balke K."/>
            <person name="Wedler E."/>
            <person name="Peters S."/>
            <person name="van Staveren M."/>
            <person name="Dirkse W."/>
            <person name="Mooijman P."/>
            <person name="Klein Lankhorst R."/>
            <person name="Weitzenegger T."/>
            <person name="Bothe G."/>
            <person name="Rose M."/>
            <person name="Hauf J."/>
            <person name="Berneiser S."/>
            <person name="Hempel S."/>
            <person name="Feldpausch M."/>
            <person name="Lamberth S."/>
            <person name="Villarroel R."/>
            <person name="Gielen J."/>
            <person name="Ardiles W."/>
            <person name="Bents O."/>
            <person name="Lemcke K."/>
            <person name="Kolesov G."/>
            <person name="Mayer K.F.X."/>
            <person name="Rudd S."/>
            <person name="Schoof H."/>
            <person name="Schueller C."/>
            <person name="Zaccaria P."/>
            <person name="Mewes H.-W."/>
            <person name="Bevan M."/>
            <person name="Fransz P.F."/>
        </authorList>
    </citation>
    <scope>NUCLEOTIDE SEQUENCE [LARGE SCALE GENOMIC DNA]</scope>
    <source>
        <strain>cv. Columbia</strain>
    </source>
</reference>
<reference key="6">
    <citation type="journal article" date="2017" name="Plant J.">
        <title>Araport11: a complete reannotation of the Arabidopsis thaliana reference genome.</title>
        <authorList>
            <person name="Cheng C.Y."/>
            <person name="Krishnakumar V."/>
            <person name="Chan A.P."/>
            <person name="Thibaud-Nissen F."/>
            <person name="Schobel S."/>
            <person name="Town C.D."/>
        </authorList>
    </citation>
    <scope>GENOME REANNOTATION</scope>
    <source>
        <strain>cv. Columbia</strain>
    </source>
</reference>
<reference key="7">
    <citation type="journal article" date="2003" name="Science">
        <title>Empirical analysis of transcriptional activity in the Arabidopsis genome.</title>
        <authorList>
            <person name="Yamada K."/>
            <person name="Lim J."/>
            <person name="Dale J.M."/>
            <person name="Chen H."/>
            <person name="Shinn P."/>
            <person name="Palm C.J."/>
            <person name="Southwick A.M."/>
            <person name="Wu H.C."/>
            <person name="Kim C.J."/>
            <person name="Nguyen M."/>
            <person name="Pham P.K."/>
            <person name="Cheuk R.F."/>
            <person name="Karlin-Newmann G."/>
            <person name="Liu S.X."/>
            <person name="Lam B."/>
            <person name="Sakano H."/>
            <person name="Wu T."/>
            <person name="Yu G."/>
            <person name="Miranda M."/>
            <person name="Quach H.L."/>
            <person name="Tripp M."/>
            <person name="Chang C.H."/>
            <person name="Lee J.M."/>
            <person name="Toriumi M.J."/>
            <person name="Chan M.M."/>
            <person name="Tang C.C."/>
            <person name="Onodera C.S."/>
            <person name="Deng J.M."/>
            <person name="Akiyama K."/>
            <person name="Ansari Y."/>
            <person name="Arakawa T."/>
            <person name="Banh J."/>
            <person name="Banno F."/>
            <person name="Bowser L."/>
            <person name="Brooks S.Y."/>
            <person name="Carninci P."/>
            <person name="Chao Q."/>
            <person name="Choy N."/>
            <person name="Enju A."/>
            <person name="Goldsmith A.D."/>
            <person name="Gurjal M."/>
            <person name="Hansen N.F."/>
            <person name="Hayashizaki Y."/>
            <person name="Johnson-Hopson C."/>
            <person name="Hsuan V.W."/>
            <person name="Iida K."/>
            <person name="Karnes M."/>
            <person name="Khan S."/>
            <person name="Koesema E."/>
            <person name="Ishida J."/>
            <person name="Jiang P.X."/>
            <person name="Jones T."/>
            <person name="Kawai J."/>
            <person name="Kamiya A."/>
            <person name="Meyers C."/>
            <person name="Nakajima M."/>
            <person name="Narusaka M."/>
            <person name="Seki M."/>
            <person name="Sakurai T."/>
            <person name="Satou M."/>
            <person name="Tamse R."/>
            <person name="Vaysberg M."/>
            <person name="Wallender E.K."/>
            <person name="Wong C."/>
            <person name="Yamamura Y."/>
            <person name="Yuan S."/>
            <person name="Shinozaki K."/>
            <person name="Davis R.W."/>
            <person name="Theologis A."/>
            <person name="Ecker J.R."/>
        </authorList>
    </citation>
    <scope>NUCLEOTIDE SEQUENCE [LARGE SCALE MRNA]</scope>
    <source>
        <strain>cv. Columbia</strain>
    </source>
</reference>
<reference key="8">
    <citation type="journal article" date="2005" name="Planta">
        <title>The Arabidopsis SERK1 protein interacts with the AAA-ATPase AtCDC48, the 14-3-3 protein GF14lambda and the PP2C phosphatase KAPP.</title>
        <authorList>
            <person name="Rienties I.M."/>
            <person name="Vink J."/>
            <person name="Borst J.W."/>
            <person name="Russinova E."/>
            <person name="de Vries S.C."/>
        </authorList>
    </citation>
    <scope>INTERACTION WITH SERK1</scope>
    <scope>PHOSPHORYLATION</scope>
    <scope>SUBCELLULAR LOCATION</scope>
    <scope>IDENTIFICATION IN THE SERK1 COMPLEX</scope>
</reference>
<reference key="9">
    <citation type="journal article" date="2007" name="Plant J.">
        <title>TPK1, a Ca(2+)-regulated Arabidopsis vacuole two-pore K(+) channel is activated by 14-3-3 proteins.</title>
        <authorList>
            <person name="Latz A."/>
            <person name="Becker D."/>
            <person name="Hekman M."/>
            <person name="Mueller T."/>
            <person name="Beyhl D."/>
            <person name="Marten I."/>
            <person name="Eing C."/>
            <person name="Fischer A."/>
            <person name="Dunkel M."/>
            <person name="Bertl A."/>
            <person name="Rapp U.R."/>
            <person name="Hedrich R."/>
        </authorList>
    </citation>
    <scope>FUNCTION</scope>
    <scope>INTERACTION WITH TPK1</scope>
</reference>
<reference key="10">
    <citation type="journal article" date="2014" name="Plant J.">
        <title>Light modulated activity of root alkaline/neutral invertase involves the interaction with 14-3-3 proteins.</title>
        <authorList>
            <person name="Gao J."/>
            <person name="van Kleeff P.J."/>
            <person name="Oecking C."/>
            <person name="Li K.W."/>
            <person name="Erban A."/>
            <person name="Kopka J."/>
            <person name="Hincha D.K."/>
            <person name="de Boer A.H."/>
        </authorList>
    </citation>
    <scope>INTERACTION WITH CINV1</scope>
</reference>
<reference key="11">
    <citation type="journal article" date="2015" name="Sci. China Life Sci.">
        <title>14-3-3 lambda protein interacts with ADF1 to regulate actin cytoskeleton dynamics in Arabidopsis.</title>
        <authorList>
            <person name="Zhao S."/>
            <person name="Zhao Y."/>
            <person name="Guo Y."/>
        </authorList>
    </citation>
    <scope>FUNCTION</scope>
    <scope>INTERACTION WITH ADF1</scope>
    <scope>DISRUPTION PHENOTYPE</scope>
</reference>
<reference key="12">
    <citation type="journal article" date="2017" name="Mol. Cell">
        <title>Plasma membrane CRPK1-mediated phosphorylation of 14-3-3 proteins induces their nuclear import to fine-tune CBF signaling during cold response.</title>
        <authorList>
            <person name="Liu Z."/>
            <person name="Jia Y."/>
            <person name="Ding Y."/>
            <person name="Shi Y."/>
            <person name="Li Z."/>
            <person name="Guo Y."/>
            <person name="Gong Z."/>
            <person name="Yang S."/>
        </authorList>
    </citation>
    <scope>FUNCTION</scope>
    <scope>DISRUPTION PHENOTYPE</scope>
    <scope>MUTAGENESIS OF SER-61; SER-70; SER-112; SER-193 AND THR-214</scope>
    <scope>INTERACTION WITH CRPK1; DREB1A AND DREB1B</scope>
    <scope>SUBCELLULAR LOCATION</scope>
    <scope>PHOSPHORYLATION AT SER-70; SER-112; SER-193 AND THR-214 BY CRPK1</scope>
    <scope>IDENTIFICATION BY MASS SPECTROMETRY</scope>
    <source>
        <strain>cv. Columbia</strain>
    </source>
</reference>
<reference key="13">
    <citation type="journal article" date="2019" name="Front. Plant Sci.">
        <title>BYPASS1-LIKE, A DUF793 family protein, participates in freezing tolerance via the CBF pathway in Arabidopsis.</title>
        <authorList>
            <person name="Chen T."/>
            <person name="Chen J.-H."/>
            <person name="Zhang W."/>
            <person name="Yang G."/>
            <person name="Yu L.-J."/>
            <person name="Li D.-M."/>
            <person name="Li B."/>
            <person name="Sheng H.-M."/>
            <person name="Zhang H."/>
            <person name="An L.-Z."/>
        </authorList>
    </citation>
    <scope>DISRUPTION PHENOTYPE</scope>
    <scope>INTERACTION WITH B1L</scope>
    <source>
        <strain>cv. Columbia</strain>
    </source>
</reference>
<evidence type="ECO:0000250" key="1"/>
<evidence type="ECO:0000269" key="2">
    <source>
    </source>
</evidence>
<evidence type="ECO:0000269" key="3">
    <source>
    </source>
</evidence>
<evidence type="ECO:0000269" key="4">
    <source>
    </source>
</evidence>
<evidence type="ECO:0000269" key="5">
    <source>
    </source>
</evidence>
<evidence type="ECO:0000269" key="6">
    <source>
    </source>
</evidence>
<evidence type="ECO:0000269" key="7">
    <source>
    </source>
</evidence>
<evidence type="ECO:0000303" key="8">
    <source>
    </source>
</evidence>
<evidence type="ECO:0000303" key="9">
    <source>
    </source>
</evidence>
<evidence type="ECO:0000303" key="10">
    <source>
    </source>
</evidence>
<evidence type="ECO:0000303" key="11">
    <source>
    </source>
</evidence>
<evidence type="ECO:0000303" key="12">
    <source ref="4"/>
</evidence>
<evidence type="ECO:0000305" key="13"/>
<evidence type="ECO:0000312" key="14">
    <source>
        <dbReference type="Araport" id="AT5G10450"/>
    </source>
</evidence>
<evidence type="ECO:0000312" key="15">
    <source>
        <dbReference type="EMBL" id="CAB89398.1"/>
    </source>
</evidence>
<evidence type="ECO:0007829" key="16">
    <source>
        <dbReference type="PDB" id="8QT5"/>
    </source>
</evidence>
<feature type="chain" id="PRO_0000058668" description="14-3-3-like protein G-BOX factor 14 lambda">
    <location>
        <begin position="1"/>
        <end position="248"/>
    </location>
</feature>
<feature type="modified residue" description="Phosphoserine; by CRPK1" evidence="6">
    <location>
        <position position="70"/>
    </location>
</feature>
<feature type="modified residue" description="Phosphoserine; by CRPK1" evidence="6">
    <location>
        <position position="112"/>
    </location>
</feature>
<feature type="modified residue" description="Phosphoserine; by CRPK1" evidence="6">
    <location>
        <position position="193"/>
    </location>
</feature>
<feature type="modified residue" description="Phosphothreonine; by CRPK1" evidence="6">
    <location>
        <position position="214"/>
    </location>
</feature>
<feature type="splice variant" id="VSP_041594" description="In isoform 2." evidence="13">
    <original>EQMDEA</original>
    <variation>TNQMHHIRDIKEHVKTEITAKPCVLSYYYSM</variation>
    <location>
        <begin position="243"/>
        <end position="248"/>
    </location>
</feature>
<feature type="mutagenesis site" description="Normal phosphorylation." evidence="6">
    <original>S</original>
    <variation>A</variation>
    <location>
        <position position="61"/>
    </location>
</feature>
<feature type="mutagenesis site" description="Reduced phosphorylation by CRPK1. Impaired phosphorylation and loss of translocation from cytoplasm to the nucleus in response to cold; when associated with A-112; A-193 and A-214." evidence="6">
    <original>S</original>
    <variation>A</variation>
    <location>
        <position position="70"/>
    </location>
</feature>
<feature type="mutagenesis site" description="Reduced phosphorylation by CRPK1. Impaired phosphorylation and loss of translocation from cytoplasm to the nucleus in response to cold; when associated with A-70; A-193 and A-214." evidence="6">
    <original>S</original>
    <variation>A</variation>
    <location>
        <position position="112"/>
    </location>
</feature>
<feature type="mutagenesis site" description="Reduced phosphorylation by CRPK1. Impaired phosphorylation and loss of translocation from cytoplasm to the nucleus in response to cold; when associated with A-70; A-112 and A-214." evidence="6">
    <original>S</original>
    <variation>A</variation>
    <location>
        <position position="193"/>
    </location>
</feature>
<feature type="mutagenesis site" description="Reduced phosphorylation by CRPK1. Impaired phosphorylation and loss of translocation from cytoplasm to the nucleus in response to cold; when associated with A-70; A-112 and A-193." evidence="6">
    <original>T</original>
    <variation>A</variation>
    <location>
        <position position="214"/>
    </location>
</feature>
<feature type="sequence conflict" description="In Ref. 1; CAA52238." evidence="13" ref="1">
    <original>MQEQMDEA</original>
    <variation>YAGADGRGLRI</variation>
    <location>
        <begin position="241"/>
        <end position="248"/>
    </location>
</feature>
<feature type="helix" evidence="16">
    <location>
        <begin position="7"/>
        <end position="19"/>
    </location>
</feature>
<feature type="helix" evidence="16">
    <location>
        <begin position="23"/>
        <end position="37"/>
    </location>
</feature>
<feature type="turn" evidence="16">
    <location>
        <begin position="38"/>
        <end position="40"/>
    </location>
</feature>
<feature type="helix" evidence="16">
    <location>
        <begin position="45"/>
        <end position="78"/>
    </location>
</feature>
<feature type="helix" evidence="16">
    <location>
        <begin position="82"/>
        <end position="112"/>
    </location>
</feature>
<feature type="helix" evidence="16">
    <location>
        <begin position="114"/>
        <end position="117"/>
    </location>
</feature>
<feature type="helix" evidence="16">
    <location>
        <begin position="121"/>
        <end position="141"/>
    </location>
</feature>
<feature type="helix" evidence="16">
    <location>
        <begin position="146"/>
        <end position="168"/>
    </location>
</feature>
<feature type="helix" evidence="16">
    <location>
        <begin position="174"/>
        <end position="189"/>
    </location>
</feature>
<feature type="helix" evidence="16">
    <location>
        <begin position="194"/>
        <end position="210"/>
    </location>
</feature>
<feature type="turn" evidence="16">
    <location>
        <begin position="217"/>
        <end position="219"/>
    </location>
</feature>
<feature type="helix" evidence="16">
    <location>
        <begin position="220"/>
        <end position="239"/>
    </location>
</feature>
<keyword id="KW-0002">3D-structure</keyword>
<keyword id="KW-0025">Alternative splicing</keyword>
<keyword id="KW-1003">Cell membrane</keyword>
<keyword id="KW-0963">Cytoplasm</keyword>
<keyword id="KW-0472">Membrane</keyword>
<keyword id="KW-0539">Nucleus</keyword>
<keyword id="KW-0597">Phosphoprotein</keyword>
<keyword id="KW-1185">Reference proteome</keyword>
<keyword id="KW-0346">Stress response</keyword>
<protein>
    <recommendedName>
        <fullName evidence="11 12">14-3-3-like protein G-BOX factor 14 lambda</fullName>
        <shortName evidence="11 12">14-3-3-like protein GF14 lambda</shortName>
        <shortName evidence="8">14-3-3lambda</shortName>
    </recommendedName>
    <alternativeName>
        <fullName evidence="10">14-3-3-like protein AFT1</fullName>
    </alternativeName>
    <alternativeName>
        <fullName evidence="9">14-3-3-like protein RCI2</fullName>
    </alternativeName>
    <alternativeName>
        <fullName evidence="12">General regulatory factor 6</fullName>
    </alternativeName>
</protein>